<organism>
    <name type="scientific">Rhodococcus opacus (strain B4)</name>
    <dbReference type="NCBI Taxonomy" id="632772"/>
    <lineage>
        <taxon>Bacteria</taxon>
        <taxon>Bacillati</taxon>
        <taxon>Actinomycetota</taxon>
        <taxon>Actinomycetes</taxon>
        <taxon>Mycobacteriales</taxon>
        <taxon>Nocardiaceae</taxon>
        <taxon>Rhodococcus</taxon>
    </lineage>
</organism>
<name>SERC_RHOOB</name>
<reference key="1">
    <citation type="submission" date="2009-03" db="EMBL/GenBank/DDBJ databases">
        <title>Comparison of the complete genome sequences of Rhodococcus erythropolis PR4 and Rhodococcus opacus B4.</title>
        <authorList>
            <person name="Takarada H."/>
            <person name="Sekine M."/>
            <person name="Hosoyama A."/>
            <person name="Yamada R."/>
            <person name="Fujisawa T."/>
            <person name="Omata S."/>
            <person name="Shimizu A."/>
            <person name="Tsukatani N."/>
            <person name="Tanikawa S."/>
            <person name="Fujita N."/>
            <person name="Harayama S."/>
        </authorList>
    </citation>
    <scope>NUCLEOTIDE SEQUENCE [LARGE SCALE GENOMIC DNA]</scope>
    <source>
        <strain>B4</strain>
    </source>
</reference>
<gene>
    <name evidence="1" type="primary">serC</name>
    <name type="ordered locus">ROP_50530</name>
</gene>
<keyword id="KW-0028">Amino-acid biosynthesis</keyword>
<keyword id="KW-0032">Aminotransferase</keyword>
<keyword id="KW-0963">Cytoplasm</keyword>
<keyword id="KW-0663">Pyridoxal phosphate</keyword>
<keyword id="KW-0664">Pyridoxine biosynthesis</keyword>
<keyword id="KW-0718">Serine biosynthesis</keyword>
<keyword id="KW-0808">Transferase</keyword>
<protein>
    <recommendedName>
        <fullName evidence="1">Phosphoserine aminotransferase</fullName>
        <ecNumber evidence="1">2.6.1.52</ecNumber>
    </recommendedName>
    <alternativeName>
        <fullName evidence="1">Phosphohydroxythreonine aminotransferase</fullName>
        <shortName evidence="1">PSAT</shortName>
    </alternativeName>
</protein>
<evidence type="ECO:0000255" key="1">
    <source>
        <dbReference type="HAMAP-Rule" id="MF_00160"/>
    </source>
</evidence>
<comment type="function">
    <text evidence="1">Catalyzes the reversible conversion of 3-phosphohydroxypyruvate to phosphoserine and of 3-hydroxy-2-oxo-4-phosphonooxybutanoate to phosphohydroxythreonine.</text>
</comment>
<comment type="catalytic activity">
    <reaction evidence="1">
        <text>O-phospho-L-serine + 2-oxoglutarate = 3-phosphooxypyruvate + L-glutamate</text>
        <dbReference type="Rhea" id="RHEA:14329"/>
        <dbReference type="ChEBI" id="CHEBI:16810"/>
        <dbReference type="ChEBI" id="CHEBI:18110"/>
        <dbReference type="ChEBI" id="CHEBI:29985"/>
        <dbReference type="ChEBI" id="CHEBI:57524"/>
        <dbReference type="EC" id="2.6.1.52"/>
    </reaction>
</comment>
<comment type="catalytic activity">
    <reaction evidence="1">
        <text>4-(phosphooxy)-L-threonine + 2-oxoglutarate = (R)-3-hydroxy-2-oxo-4-phosphooxybutanoate + L-glutamate</text>
        <dbReference type="Rhea" id="RHEA:16573"/>
        <dbReference type="ChEBI" id="CHEBI:16810"/>
        <dbReference type="ChEBI" id="CHEBI:29985"/>
        <dbReference type="ChEBI" id="CHEBI:58452"/>
        <dbReference type="ChEBI" id="CHEBI:58538"/>
        <dbReference type="EC" id="2.6.1.52"/>
    </reaction>
</comment>
<comment type="cofactor">
    <cofactor evidence="1">
        <name>pyridoxal 5'-phosphate</name>
        <dbReference type="ChEBI" id="CHEBI:597326"/>
    </cofactor>
    <text evidence="1">Binds 1 pyridoxal phosphate per subunit.</text>
</comment>
<comment type="pathway">
    <text evidence="1">Amino-acid biosynthesis; L-serine biosynthesis; L-serine from 3-phospho-D-glycerate: step 2/3.</text>
</comment>
<comment type="pathway">
    <text evidence="1">Cofactor biosynthesis; pyridoxine 5'-phosphate biosynthesis; pyridoxine 5'-phosphate from D-erythrose 4-phosphate: step 3/5.</text>
</comment>
<comment type="subunit">
    <text evidence="1">Homodimer.</text>
</comment>
<comment type="subcellular location">
    <subcellularLocation>
        <location evidence="1">Cytoplasm</location>
    </subcellularLocation>
</comment>
<comment type="similarity">
    <text evidence="1">Belongs to the class-V pyridoxal-phosphate-dependent aminotransferase family. SerC subfamily.</text>
</comment>
<proteinExistence type="inferred from homology"/>
<accession>C1ATN6</accession>
<feature type="chain" id="PRO_1000123476" description="Phosphoserine aminotransferase">
    <location>
        <begin position="1"/>
        <end position="373"/>
    </location>
</feature>
<feature type="binding site" evidence="1">
    <location>
        <position position="46"/>
    </location>
    <ligand>
        <name>L-glutamate</name>
        <dbReference type="ChEBI" id="CHEBI:29985"/>
    </ligand>
</feature>
<feature type="binding site" evidence="1">
    <location>
        <position position="104"/>
    </location>
    <ligand>
        <name>pyridoxal 5'-phosphate</name>
        <dbReference type="ChEBI" id="CHEBI:597326"/>
    </ligand>
</feature>
<feature type="binding site" evidence="1">
    <location>
        <position position="150"/>
    </location>
    <ligand>
        <name>pyridoxal 5'-phosphate</name>
        <dbReference type="ChEBI" id="CHEBI:597326"/>
    </ligand>
</feature>
<feature type="binding site" evidence="1">
    <location>
        <position position="172"/>
    </location>
    <ligand>
        <name>pyridoxal 5'-phosphate</name>
        <dbReference type="ChEBI" id="CHEBI:597326"/>
    </ligand>
</feature>
<feature type="binding site" evidence="1">
    <location>
        <position position="195"/>
    </location>
    <ligand>
        <name>pyridoxal 5'-phosphate</name>
        <dbReference type="ChEBI" id="CHEBI:597326"/>
    </ligand>
</feature>
<feature type="binding site" evidence="1">
    <location>
        <begin position="247"/>
        <end position="248"/>
    </location>
    <ligand>
        <name>pyridoxal 5'-phosphate</name>
        <dbReference type="ChEBI" id="CHEBI:597326"/>
    </ligand>
</feature>
<feature type="modified residue" description="N6-(pyridoxal phosphate)lysine" evidence="1">
    <location>
        <position position="196"/>
    </location>
</feature>
<dbReference type="EC" id="2.6.1.52" evidence="1"/>
<dbReference type="EMBL" id="AP011115">
    <property type="protein sequence ID" value="BAH53300.1"/>
    <property type="molecule type" value="Genomic_DNA"/>
</dbReference>
<dbReference type="RefSeq" id="WP_005244098.1">
    <property type="nucleotide sequence ID" value="NC_012522.1"/>
</dbReference>
<dbReference type="SMR" id="C1ATN6"/>
<dbReference type="STRING" id="632772.ROP_50530"/>
<dbReference type="GeneID" id="69889299"/>
<dbReference type="KEGG" id="rop:ROP_50530"/>
<dbReference type="PATRIC" id="fig|632772.20.peg.5278"/>
<dbReference type="HOGENOM" id="CLU_061974_0_0_11"/>
<dbReference type="OrthoDB" id="975012at2"/>
<dbReference type="UniPathway" id="UPA00135">
    <property type="reaction ID" value="UER00197"/>
</dbReference>
<dbReference type="UniPathway" id="UPA00244">
    <property type="reaction ID" value="UER00311"/>
</dbReference>
<dbReference type="Proteomes" id="UP000002212">
    <property type="component" value="Chromosome"/>
</dbReference>
<dbReference type="GO" id="GO:0005737">
    <property type="term" value="C:cytoplasm"/>
    <property type="evidence" value="ECO:0007669"/>
    <property type="project" value="UniProtKB-SubCell"/>
</dbReference>
<dbReference type="GO" id="GO:0008453">
    <property type="term" value="F:alanine-glyoxylate transaminase activity"/>
    <property type="evidence" value="ECO:0007669"/>
    <property type="project" value="TreeGrafter"/>
</dbReference>
<dbReference type="GO" id="GO:0004760">
    <property type="term" value="F:L-serine-pyruvate transaminase activity"/>
    <property type="evidence" value="ECO:0007669"/>
    <property type="project" value="TreeGrafter"/>
</dbReference>
<dbReference type="GO" id="GO:0004648">
    <property type="term" value="F:O-phospho-L-serine:2-oxoglutarate aminotransferase activity"/>
    <property type="evidence" value="ECO:0007669"/>
    <property type="project" value="UniProtKB-UniRule"/>
</dbReference>
<dbReference type="GO" id="GO:0030170">
    <property type="term" value="F:pyridoxal phosphate binding"/>
    <property type="evidence" value="ECO:0007669"/>
    <property type="project" value="UniProtKB-UniRule"/>
</dbReference>
<dbReference type="GO" id="GO:0019265">
    <property type="term" value="P:glycine biosynthetic process, by transamination of glyoxylate"/>
    <property type="evidence" value="ECO:0007669"/>
    <property type="project" value="TreeGrafter"/>
</dbReference>
<dbReference type="GO" id="GO:0006564">
    <property type="term" value="P:L-serine biosynthetic process"/>
    <property type="evidence" value="ECO:0007669"/>
    <property type="project" value="UniProtKB-UniRule"/>
</dbReference>
<dbReference type="GO" id="GO:0008615">
    <property type="term" value="P:pyridoxine biosynthetic process"/>
    <property type="evidence" value="ECO:0007669"/>
    <property type="project" value="UniProtKB-UniRule"/>
</dbReference>
<dbReference type="Gene3D" id="3.90.1150.10">
    <property type="entry name" value="Aspartate Aminotransferase, domain 1"/>
    <property type="match status" value="1"/>
</dbReference>
<dbReference type="Gene3D" id="3.40.640.10">
    <property type="entry name" value="Type I PLP-dependent aspartate aminotransferase-like (Major domain)"/>
    <property type="match status" value="1"/>
</dbReference>
<dbReference type="HAMAP" id="MF_00160">
    <property type="entry name" value="SerC_aminotrans_5"/>
    <property type="match status" value="1"/>
</dbReference>
<dbReference type="InterPro" id="IPR000192">
    <property type="entry name" value="Aminotrans_V_dom"/>
</dbReference>
<dbReference type="InterPro" id="IPR022278">
    <property type="entry name" value="Pser_aminoTfrase"/>
</dbReference>
<dbReference type="InterPro" id="IPR006272">
    <property type="entry name" value="Pser_aminoTfrase_mycobac"/>
</dbReference>
<dbReference type="InterPro" id="IPR015424">
    <property type="entry name" value="PyrdxlP-dep_Trfase"/>
</dbReference>
<dbReference type="InterPro" id="IPR015421">
    <property type="entry name" value="PyrdxlP-dep_Trfase_major"/>
</dbReference>
<dbReference type="InterPro" id="IPR015422">
    <property type="entry name" value="PyrdxlP-dep_Trfase_small"/>
</dbReference>
<dbReference type="NCBIfam" id="TIGR01366">
    <property type="entry name" value="serC_3"/>
    <property type="match status" value="1"/>
</dbReference>
<dbReference type="PANTHER" id="PTHR21152:SF40">
    <property type="entry name" value="ALANINE--GLYOXYLATE AMINOTRANSFERASE"/>
    <property type="match status" value="1"/>
</dbReference>
<dbReference type="PANTHER" id="PTHR21152">
    <property type="entry name" value="AMINOTRANSFERASE CLASS V"/>
    <property type="match status" value="1"/>
</dbReference>
<dbReference type="Pfam" id="PF00266">
    <property type="entry name" value="Aminotran_5"/>
    <property type="match status" value="1"/>
</dbReference>
<dbReference type="PIRSF" id="PIRSF000525">
    <property type="entry name" value="SerC"/>
    <property type="match status" value="1"/>
</dbReference>
<dbReference type="SUPFAM" id="SSF53383">
    <property type="entry name" value="PLP-dependent transferases"/>
    <property type="match status" value="1"/>
</dbReference>
<sequence length="373" mass="39584">MTSTPIIPADLLPADGRFGCGPSKVRPEQLQSLVEVGSSVFGTSHRQKPVKDVVASVRSGLADLFSLPEGYEVVLGNGGTTAFWDAAAFGLIREKSLHLTNGEFSSKFASVAKNNPFIGDPIVVSADPGSAPEPVSDPSVDLIGWAHNETSTGVAIPVSRPAGSENALIAIDATSGAGGLPVNVADADVYYFAPQKCFAADGGLWIALMSPKALERVAEIKDSGRWTPDFLSLPIAVDNSSKDQTYNTPAVATLLLLANQIDWLNGKGGLDWATSRTADSSSRLYQWAEASEYATPFVTDPAHRSQVVGTIDFDDKIDAAQVAKILRANGVVDTEPYRKLGRNQLRVGMFPAIDPEDVSQLTKSIDWVVSQLG</sequence>